<sequence length="104" mass="11822">MKYAIIEASGKQFWVEPGRFYDFNSLNVEPGDKIALTRVLLINDNGNITVGKPCLDNVKVEATVLGHLRGQKVTVYKMQPKKKTRKKQGHRTNLTRLLIDNIIN</sequence>
<evidence type="ECO:0000255" key="1">
    <source>
        <dbReference type="HAMAP-Rule" id="MF_01363"/>
    </source>
</evidence>
<evidence type="ECO:0000305" key="2"/>
<geneLocation type="chloroplast"/>
<organism>
    <name type="scientific">Guillardia theta</name>
    <name type="common">Cryptophyte</name>
    <name type="synonym">Cryptomonas phi</name>
    <dbReference type="NCBI Taxonomy" id="55529"/>
    <lineage>
        <taxon>Eukaryota</taxon>
        <taxon>Cryptophyceae</taxon>
        <taxon>Pyrenomonadales</taxon>
        <taxon>Geminigeraceae</taxon>
        <taxon>Guillardia</taxon>
    </lineage>
</organism>
<dbReference type="EMBL" id="AF041468">
    <property type="protein sequence ID" value="AAC35614.1"/>
    <property type="molecule type" value="Genomic_DNA"/>
</dbReference>
<dbReference type="RefSeq" id="NP_050680.1">
    <property type="nucleotide sequence ID" value="NC_000926.1"/>
</dbReference>
<dbReference type="SMR" id="O78429"/>
<dbReference type="GeneID" id="856971"/>
<dbReference type="HOGENOM" id="CLU_061463_1_2_1"/>
<dbReference type="OMA" id="THITIGK"/>
<dbReference type="GO" id="GO:0009507">
    <property type="term" value="C:chloroplast"/>
    <property type="evidence" value="ECO:0007669"/>
    <property type="project" value="UniProtKB-SubCell"/>
</dbReference>
<dbReference type="GO" id="GO:0005762">
    <property type="term" value="C:mitochondrial large ribosomal subunit"/>
    <property type="evidence" value="ECO:0007669"/>
    <property type="project" value="TreeGrafter"/>
</dbReference>
<dbReference type="GO" id="GO:0019843">
    <property type="term" value="F:rRNA binding"/>
    <property type="evidence" value="ECO:0007669"/>
    <property type="project" value="UniProtKB-UniRule"/>
</dbReference>
<dbReference type="GO" id="GO:0003735">
    <property type="term" value="F:structural constituent of ribosome"/>
    <property type="evidence" value="ECO:0007669"/>
    <property type="project" value="InterPro"/>
</dbReference>
<dbReference type="GO" id="GO:0006412">
    <property type="term" value="P:translation"/>
    <property type="evidence" value="ECO:0007669"/>
    <property type="project" value="UniProtKB-UniRule"/>
</dbReference>
<dbReference type="HAMAP" id="MF_01363">
    <property type="entry name" value="Ribosomal_bL21"/>
    <property type="match status" value="1"/>
</dbReference>
<dbReference type="InterPro" id="IPR028909">
    <property type="entry name" value="bL21-like"/>
</dbReference>
<dbReference type="InterPro" id="IPR036164">
    <property type="entry name" value="bL21-like_sf"/>
</dbReference>
<dbReference type="InterPro" id="IPR001787">
    <property type="entry name" value="Ribosomal_bL21"/>
</dbReference>
<dbReference type="InterPro" id="IPR018258">
    <property type="entry name" value="Ribosomal_bL21_CS"/>
</dbReference>
<dbReference type="NCBIfam" id="TIGR00061">
    <property type="entry name" value="L21"/>
    <property type="match status" value="1"/>
</dbReference>
<dbReference type="PANTHER" id="PTHR21349">
    <property type="entry name" value="50S RIBOSOMAL PROTEIN L21"/>
    <property type="match status" value="1"/>
</dbReference>
<dbReference type="PANTHER" id="PTHR21349:SF7">
    <property type="entry name" value="LARGE RIBOSOMAL SUBUNIT PROTEIN BL21C"/>
    <property type="match status" value="1"/>
</dbReference>
<dbReference type="Pfam" id="PF00829">
    <property type="entry name" value="Ribosomal_L21p"/>
    <property type="match status" value="1"/>
</dbReference>
<dbReference type="SUPFAM" id="SSF141091">
    <property type="entry name" value="L21p-like"/>
    <property type="match status" value="1"/>
</dbReference>
<dbReference type="PROSITE" id="PS01169">
    <property type="entry name" value="RIBOSOMAL_L21"/>
    <property type="match status" value="1"/>
</dbReference>
<protein>
    <recommendedName>
        <fullName evidence="1">Large ribosomal subunit protein bL21c</fullName>
    </recommendedName>
    <alternativeName>
        <fullName evidence="2">50S ribosomal protein L21, chloroplastic</fullName>
    </alternativeName>
</protein>
<name>RK21_GUITH</name>
<accession>O78429</accession>
<comment type="function">
    <text evidence="1">This protein binds to 23S rRNA.</text>
</comment>
<comment type="subunit">
    <text evidence="1">Part of the 50S ribosomal subunit.</text>
</comment>
<comment type="subcellular location">
    <subcellularLocation>
        <location>Plastid</location>
        <location>Chloroplast</location>
    </subcellularLocation>
</comment>
<comment type="similarity">
    <text evidence="1">Belongs to the bacterial ribosomal protein bL21 family.</text>
</comment>
<feature type="chain" id="PRO_0000181024" description="Large ribosomal subunit protein bL21c">
    <location>
        <begin position="1"/>
        <end position="104"/>
    </location>
</feature>
<proteinExistence type="inferred from homology"/>
<reference key="1">
    <citation type="journal article" date="1999" name="J. Mol. Evol.">
        <title>The plastid genome of the cryptophyte alga, Guillardia theta: complete sequence and conserved synteny groups confirm its common ancestry with red algae.</title>
        <authorList>
            <person name="Douglas S.E."/>
            <person name="Penny S.L."/>
        </authorList>
    </citation>
    <scope>NUCLEOTIDE SEQUENCE [LARGE SCALE GENOMIC DNA]</scope>
</reference>
<gene>
    <name evidence="1" type="primary">rpl21</name>
</gene>
<keyword id="KW-0150">Chloroplast</keyword>
<keyword id="KW-0934">Plastid</keyword>
<keyword id="KW-0687">Ribonucleoprotein</keyword>
<keyword id="KW-0689">Ribosomal protein</keyword>
<keyword id="KW-0694">RNA-binding</keyword>
<keyword id="KW-0699">rRNA-binding</keyword>